<gene>
    <name evidence="1" type="primary">rplV</name>
    <name type="ordered locus">Nther_0199</name>
</gene>
<dbReference type="EMBL" id="CP001034">
    <property type="protein sequence ID" value="ACB83798.1"/>
    <property type="molecule type" value="Genomic_DNA"/>
</dbReference>
<dbReference type="RefSeq" id="WP_012446687.1">
    <property type="nucleotide sequence ID" value="NC_010718.1"/>
</dbReference>
<dbReference type="SMR" id="B2A4E4"/>
<dbReference type="FunCoup" id="B2A4E4">
    <property type="interactions" value="442"/>
</dbReference>
<dbReference type="STRING" id="457570.Nther_0199"/>
<dbReference type="KEGG" id="nth:Nther_0199"/>
<dbReference type="eggNOG" id="COG0091">
    <property type="taxonomic scope" value="Bacteria"/>
</dbReference>
<dbReference type="HOGENOM" id="CLU_083987_3_3_9"/>
<dbReference type="InParanoid" id="B2A4E4"/>
<dbReference type="OrthoDB" id="9805969at2"/>
<dbReference type="Proteomes" id="UP000001683">
    <property type="component" value="Chromosome"/>
</dbReference>
<dbReference type="GO" id="GO:0022625">
    <property type="term" value="C:cytosolic large ribosomal subunit"/>
    <property type="evidence" value="ECO:0007669"/>
    <property type="project" value="TreeGrafter"/>
</dbReference>
<dbReference type="GO" id="GO:0019843">
    <property type="term" value="F:rRNA binding"/>
    <property type="evidence" value="ECO:0007669"/>
    <property type="project" value="UniProtKB-UniRule"/>
</dbReference>
<dbReference type="GO" id="GO:0003735">
    <property type="term" value="F:structural constituent of ribosome"/>
    <property type="evidence" value="ECO:0007669"/>
    <property type="project" value="InterPro"/>
</dbReference>
<dbReference type="GO" id="GO:0006412">
    <property type="term" value="P:translation"/>
    <property type="evidence" value="ECO:0007669"/>
    <property type="project" value="UniProtKB-UniRule"/>
</dbReference>
<dbReference type="CDD" id="cd00336">
    <property type="entry name" value="Ribosomal_L22"/>
    <property type="match status" value="1"/>
</dbReference>
<dbReference type="FunFam" id="3.90.470.10:FF:000011">
    <property type="entry name" value="50S ribosomal protein L22"/>
    <property type="match status" value="1"/>
</dbReference>
<dbReference type="Gene3D" id="3.90.470.10">
    <property type="entry name" value="Ribosomal protein L22/L17"/>
    <property type="match status" value="1"/>
</dbReference>
<dbReference type="HAMAP" id="MF_01331_B">
    <property type="entry name" value="Ribosomal_uL22_B"/>
    <property type="match status" value="1"/>
</dbReference>
<dbReference type="InterPro" id="IPR001063">
    <property type="entry name" value="Ribosomal_uL22"/>
</dbReference>
<dbReference type="InterPro" id="IPR005727">
    <property type="entry name" value="Ribosomal_uL22_bac/chlpt-type"/>
</dbReference>
<dbReference type="InterPro" id="IPR047867">
    <property type="entry name" value="Ribosomal_uL22_bac/org-type"/>
</dbReference>
<dbReference type="InterPro" id="IPR018260">
    <property type="entry name" value="Ribosomal_uL22_CS"/>
</dbReference>
<dbReference type="InterPro" id="IPR036394">
    <property type="entry name" value="Ribosomal_uL22_sf"/>
</dbReference>
<dbReference type="NCBIfam" id="TIGR01044">
    <property type="entry name" value="rplV_bact"/>
    <property type="match status" value="1"/>
</dbReference>
<dbReference type="PANTHER" id="PTHR13501">
    <property type="entry name" value="CHLOROPLAST 50S RIBOSOMAL PROTEIN L22-RELATED"/>
    <property type="match status" value="1"/>
</dbReference>
<dbReference type="PANTHER" id="PTHR13501:SF8">
    <property type="entry name" value="LARGE RIBOSOMAL SUBUNIT PROTEIN UL22M"/>
    <property type="match status" value="1"/>
</dbReference>
<dbReference type="Pfam" id="PF00237">
    <property type="entry name" value="Ribosomal_L22"/>
    <property type="match status" value="1"/>
</dbReference>
<dbReference type="SUPFAM" id="SSF54843">
    <property type="entry name" value="Ribosomal protein L22"/>
    <property type="match status" value="1"/>
</dbReference>
<dbReference type="PROSITE" id="PS00464">
    <property type="entry name" value="RIBOSOMAL_L22"/>
    <property type="match status" value="1"/>
</dbReference>
<comment type="function">
    <text evidence="1">This protein binds specifically to 23S rRNA; its binding is stimulated by other ribosomal proteins, e.g. L4, L17, and L20. It is important during the early stages of 50S assembly. It makes multiple contacts with different domains of the 23S rRNA in the assembled 50S subunit and ribosome (By similarity).</text>
</comment>
<comment type="function">
    <text evidence="1">The globular domain of the protein is located near the polypeptide exit tunnel on the outside of the subunit, while an extended beta-hairpin is found that lines the wall of the exit tunnel in the center of the 70S ribosome.</text>
</comment>
<comment type="subunit">
    <text evidence="1">Part of the 50S ribosomal subunit.</text>
</comment>
<comment type="similarity">
    <text evidence="1">Belongs to the universal ribosomal protein uL22 family.</text>
</comment>
<accession>B2A4E4</accession>
<reference key="1">
    <citation type="submission" date="2008-04" db="EMBL/GenBank/DDBJ databases">
        <title>Complete sequence of chromosome of Natranaerobius thermophilus JW/NM-WN-LF.</title>
        <authorList>
            <consortium name="US DOE Joint Genome Institute"/>
            <person name="Copeland A."/>
            <person name="Lucas S."/>
            <person name="Lapidus A."/>
            <person name="Glavina del Rio T."/>
            <person name="Dalin E."/>
            <person name="Tice H."/>
            <person name="Bruce D."/>
            <person name="Goodwin L."/>
            <person name="Pitluck S."/>
            <person name="Chertkov O."/>
            <person name="Brettin T."/>
            <person name="Detter J.C."/>
            <person name="Han C."/>
            <person name="Kuske C.R."/>
            <person name="Schmutz J."/>
            <person name="Larimer F."/>
            <person name="Land M."/>
            <person name="Hauser L."/>
            <person name="Kyrpides N."/>
            <person name="Lykidis A."/>
            <person name="Mesbah N.M."/>
            <person name="Wiegel J."/>
        </authorList>
    </citation>
    <scope>NUCLEOTIDE SEQUENCE [LARGE SCALE GENOMIC DNA]</scope>
    <source>
        <strain>ATCC BAA-1301 / DSM 18059 / JW/NM-WN-LF</strain>
    </source>
</reference>
<feature type="chain" id="PRO_1000142287" description="Large ribosomal subunit protein uL22">
    <location>
        <begin position="1"/>
        <end position="113"/>
    </location>
</feature>
<organism>
    <name type="scientific">Natranaerobius thermophilus (strain ATCC BAA-1301 / DSM 18059 / JW/NM-WN-LF)</name>
    <dbReference type="NCBI Taxonomy" id="457570"/>
    <lineage>
        <taxon>Bacteria</taxon>
        <taxon>Bacillati</taxon>
        <taxon>Bacillota</taxon>
        <taxon>Clostridia</taxon>
        <taxon>Natranaerobiales</taxon>
        <taxon>Natranaerobiaceae</taxon>
        <taxon>Natranaerobius</taxon>
    </lineage>
</organism>
<keyword id="KW-1185">Reference proteome</keyword>
<keyword id="KW-0687">Ribonucleoprotein</keyword>
<keyword id="KW-0689">Ribosomal protein</keyword>
<keyword id="KW-0694">RNA-binding</keyword>
<keyword id="KW-0699">rRNA-binding</keyword>
<protein>
    <recommendedName>
        <fullName evidence="1">Large ribosomal subunit protein uL22</fullName>
    </recommendedName>
    <alternativeName>
        <fullName evidence="2">50S ribosomal protein L22</fullName>
    </alternativeName>
</protein>
<sequence length="113" mass="12670">MEAKATARYVRISPRKAREVIDMIRGKNIEEALGILQLTPKGATKPIEKVVKSAQANAENNFEMNPDSLYISECYVDEGPTLKRFRPRAMGRATPINKKTSHLTVVVKEQKEG</sequence>
<proteinExistence type="inferred from homology"/>
<evidence type="ECO:0000255" key="1">
    <source>
        <dbReference type="HAMAP-Rule" id="MF_01331"/>
    </source>
</evidence>
<evidence type="ECO:0000305" key="2"/>
<name>RL22_NATTJ</name>